<organism>
    <name type="scientific">Plum pox potyvirus (isolate NAT)</name>
    <name type="common">PPV</name>
    <dbReference type="NCBI Taxonomy" id="12213"/>
    <lineage>
        <taxon>Viruses</taxon>
        <taxon>Riboviria</taxon>
        <taxon>Orthornavirae</taxon>
        <taxon>Pisuviricota</taxon>
        <taxon>Stelpaviricetes</taxon>
        <taxon>Patatavirales</taxon>
        <taxon>Potyviridae</taxon>
        <taxon>Potyvirus</taxon>
        <taxon>Potyvirus plumpoxi</taxon>
        <taxon>Plum pox virus</taxon>
    </lineage>
</organism>
<keyword id="KW-1031">Host cell junction</keyword>
<keyword id="KW-0945">Host-virus interaction</keyword>
<keyword id="KW-0378">Hydrolase</keyword>
<keyword id="KW-1090">Inhibition of host innate immune response by virus</keyword>
<keyword id="KW-0645">Protease</keyword>
<keyword id="KW-0688">Ribosomal frameshifting</keyword>
<keyword id="KW-0720">Serine protease</keyword>
<keyword id="KW-0941">Suppressor of RNA silencing</keyword>
<keyword id="KW-0813">Transport</keyword>
<keyword id="KW-0899">Viral immunoevasion</keyword>
<keyword id="KW-0916">Viral movement protein</keyword>
<name>MVP_PPVNA</name>
<accession>P0CK02</accession>
<organismHost>
    <name type="scientific">Prunus armeniaca</name>
    <name type="common">Apricot</name>
    <name type="synonym">Armeniaca vulgaris</name>
    <dbReference type="NCBI Taxonomy" id="36596"/>
</organismHost>
<organismHost>
    <name type="scientific">Prunus cerasifera</name>
    <name type="common">cherry plum</name>
    <dbReference type="NCBI Taxonomy" id="36595"/>
</organismHost>
<organismHost>
    <name type="scientific">Prunus domestica</name>
    <name type="common">Garden plum</name>
    <dbReference type="NCBI Taxonomy" id="3758"/>
</organismHost>
<organismHost>
    <name type="scientific">Prunus glandulosa</name>
    <dbReference type="NCBI Taxonomy" id="105665"/>
</organismHost>
<organismHost>
    <name type="scientific">Prunus persica</name>
    <name type="common">Peach</name>
    <name type="synonym">Amygdalus persica</name>
    <dbReference type="NCBI Taxonomy" id="3760"/>
</organismHost>
<organismHost>
    <name type="scientific">Prunus salicina</name>
    <dbReference type="NCBI Taxonomy" id="88123"/>
</organismHost>
<organismHost>
    <name type="scientific">Prunus spinosa</name>
    <name type="common">Blackthorn</name>
    <name type="synonym">Prunus domestica var. spinosa</name>
    <dbReference type="NCBI Taxonomy" id="114937"/>
</organismHost>
<feature type="chain" id="PRO_0000420072" description="P3N-PIPO polyprotein">
    <location>
        <begin position="1"/>
        <end position="1020"/>
    </location>
</feature>
<feature type="chain" id="PRO_0000420073" description="P1 protease" evidence="4">
    <location>
        <begin position="1"/>
        <end position="308"/>
    </location>
</feature>
<feature type="chain" id="PRO_0000420074" description="Helper component proteinase" evidence="4">
    <location>
        <begin position="309"/>
        <end position="766"/>
    </location>
</feature>
<feature type="chain" id="PRO_0000408546" description="Movement protein P3N-PIPO">
    <location>
        <begin position="767"/>
        <end position="1020"/>
    </location>
</feature>
<feature type="domain" description="Peptidase S30" evidence="6">
    <location>
        <begin position="165"/>
        <end position="308"/>
    </location>
</feature>
<feature type="domain" description="Peptidase C6" evidence="5">
    <location>
        <begin position="644"/>
        <end position="766"/>
    </location>
</feature>
<feature type="short sequence motif" description="Involved in interaction with stylet and aphid transmission" evidence="1">
    <location>
        <begin position="360"/>
        <end position="363"/>
    </location>
</feature>
<feature type="short sequence motif" description="Involved in virions binding and aphid transmission" evidence="1">
    <location>
        <begin position="618"/>
        <end position="620"/>
    </location>
</feature>
<feature type="active site" description="For P1 proteinase activity" evidence="6">
    <location>
        <position position="216"/>
    </location>
</feature>
<feature type="active site" description="For P1 proteinase activity" evidence="6">
    <location>
        <position position="225"/>
    </location>
</feature>
<feature type="active site" description="For P1 proteinase activity" evidence="6">
    <location>
        <position position="259"/>
    </location>
</feature>
<feature type="active site" description="For helper component proteinase activity" evidence="5">
    <location>
        <position position="652"/>
    </location>
</feature>
<feature type="active site" description="For helper component proteinase activity" evidence="5">
    <location>
        <position position="725"/>
    </location>
</feature>
<feature type="site" description="Cleavage; by P1 proteinase" evidence="6">
    <location>
        <begin position="308"/>
        <end position="309"/>
    </location>
</feature>
<feature type="site" description="Cleavage; by autolysis" evidence="5">
    <location>
        <begin position="766"/>
        <end position="767"/>
    </location>
</feature>
<feature type="unsure residue">
    <location>
        <begin position="920"/>
        <end position="926"/>
    </location>
</feature>
<evidence type="ECO:0000250" key="1"/>
<evidence type="ECO:0000250" key="2">
    <source>
        <dbReference type="UniProtKB" id="P04517"/>
    </source>
</evidence>
<evidence type="ECO:0000250" key="3">
    <source>
        <dbReference type="UniProtKB" id="P0CK11"/>
    </source>
</evidence>
<evidence type="ECO:0000255" key="4"/>
<evidence type="ECO:0000255" key="5">
    <source>
        <dbReference type="PROSITE-ProRule" id="PRU01080"/>
    </source>
</evidence>
<evidence type="ECO:0000255" key="6">
    <source>
        <dbReference type="PROSITE-ProRule" id="PRU01219"/>
    </source>
</evidence>
<evidence type="ECO:0000305" key="7"/>
<proteinExistence type="inferred from homology"/>
<reference key="1">
    <citation type="journal article" date="1989" name="J. Gen. Virol.">
        <title>The complete nucleotide sequence of plum pox virus RNA.</title>
        <authorList>
            <person name="Maiss E."/>
            <person name="Timpe U."/>
            <person name="Brisske A."/>
            <person name="Jelkmann W."/>
            <person name="Casper R."/>
            <person name="Himmler G."/>
            <person name="Mattanovich D."/>
            <person name="Katinger H.W.D."/>
        </authorList>
    </citation>
    <scope>NUCLEOTIDE SEQUENCE [GENOMIC RNA]</scope>
</reference>
<protein>
    <recommendedName>
        <fullName>P3N-PIPO polyprotein</fullName>
    </recommendedName>
    <component>
        <recommendedName>
            <fullName>P1 protease</fullName>
            <ecNumber>3.4.21.-</ecNumber>
        </recommendedName>
        <alternativeName>
            <fullName>N-terminal protein</fullName>
        </alternativeName>
        <alternativeName>
            <fullName>P1 proteinase</fullName>
        </alternativeName>
    </component>
    <component>
        <recommendedName>
            <fullName>Helper component proteinase</fullName>
            <shortName>HC-pro</shortName>
            <ecNumber>3.4.22.45</ecNumber>
        </recommendedName>
    </component>
    <component>
        <recommendedName>
            <fullName>Movement protein P3N-PIPO</fullName>
        </recommendedName>
        <alternativeName>
            <fullName>Pretty interesting potyviridae ORF</fullName>
            <shortName>PIPO</shortName>
        </alternativeName>
    </component>
</protein>
<comment type="function">
    <molecule>Helper component proteinase</molecule>
    <text evidence="2">Required for aphid transmission and also has proteolytic activity. Only cleaves a Gly-Gly dipeptide at its own C-terminus. Interacts with virions and aphid stylets. Acts as a suppressor of RNA-mediated gene silencing, also known as post-transcriptional gene silencing (PTGS), a mechanism of plant viral defense that limits the accumulation of viral RNAs. May have RNA-binding activity.</text>
</comment>
<comment type="function">
    <molecule>Movement protein P3N-PIPO</molecule>
    <text evidence="3">Allows efficient cell to cell propagation, by bypassing the host cell wall barrier. Transports viral genome to neighboring plant cells directly through plasmosdesmata, without any budding.</text>
</comment>
<comment type="catalytic activity">
    <molecule>Helper component proteinase</molecule>
    <reaction>
        <text>Hydrolyzes a Gly-|-Gly bond at its own C-terminus, commonly in the sequence -Tyr-Xaa-Val-Gly-|-Gly, in the processing of the potyviral polyprotein.</text>
        <dbReference type="EC" id="3.4.22.45"/>
    </reaction>
</comment>
<comment type="subunit">
    <molecule>Movement protein P3N-PIPO</molecule>
    <text evidence="3">Interacts (via PIPO domain) with host PCaP1 protein; this interaction may help to anchor the movement complex to the plasma membrane from which the complex could move to the plasmodesmata.</text>
</comment>
<comment type="subcellular location">
    <molecule>Movement protein P3N-PIPO</molecule>
    <subcellularLocation>
        <location evidence="3">Host cell junction</location>
        <location evidence="3">Host plasmodesma</location>
    </subcellularLocation>
</comment>
<comment type="alternative products">
    <event type="ribosomal frameshifting"/>
    <isoform>
        <id>P0CK02-1</id>
        <name>P3N-PIPO polyprotein</name>
        <sequence type="displayed"/>
    </isoform>
    <isoform>
        <id>P17766-1</id>
        <name>Genome polyprotein</name>
        <sequence type="external"/>
    </isoform>
</comment>
<comment type="domain">
    <text evidence="1">The N-terminus of helper component proteinase is involved in interaction with stylets. The central part is involved in interaction with virions and the C-terminus is involved in cell-to cell movement of the virus (By similarity).</text>
</comment>
<comment type="PTM">
    <text evidence="1">Potyviral RNA is expressed as two polyproteins which undergo post-translational proteolytic processing. Genome polyprotein is processed by NIa-pro, P1 and HC-pro proteinases resulting in the production of at least ten individual proteins. P3N-PIPO is cleaved by P1 and HC-pro proteinases resulting in the production of three individual proteins. The P1 proteinase and the HC-pro cleave only their respective C-termini autocatalytically (By similarity).</text>
</comment>
<comment type="miscellaneous">
    <molecule>Isoform P3N-PIPO polyprotein</molecule>
    <text>Produced by -1 ribosomal frameshifting in P3 ORF.</text>
</comment>
<comment type="similarity">
    <text evidence="7">Belongs to the potyviridae P3N-PIPO polyprotein family.</text>
</comment>
<sequence>MSTIVFGSFTCHLDAAIHQDNADRLAKAWTRPENRQVSNAHLLCRRAAESLINTYESATASAWKGLEEKLQPMFAKREFSKTVTKRKGLRCFKESSEKFIEKKLRKQYQEERERLQFLNGPDAIVNQISVDKCEASVRVPSPHIIEKPSFVTPSMKKKVVFKKVRMSEASLQLFMRRVAANAKANGQKVEIIGRKRVVGNYTTKSRLTYFRTHVRHLDGSKPRYDLVLDEATKKILQLFANTSGFHHVHKKGEVTPGMSGFVVNPMNLSDPMQVYDTDLFIVRGKHNSILVDSRCKVSKKQSNEIIHYSDPGKQFSDGFTNSFMQCKLRETDHQCTSDLDVKECGYVAALVCQAIIPCGKITCLQCAQKYSYMSQQEIRDRFSTVIEQHEKTVMDNYPQFSHVLAFLKRYRELMRVENQNYEAFKDITHMIGERKEAPFSHLNKINELIIKGGMMSAQDYIEASDHLRELARYQKNRTENIRSGSIKAFRNKISSKAHVNMQLMCDNQLDTNGNFVWGQREYHAKRFFRNYFDVIDVSEGYRRHIVRENPRGIRKLAIGNLVMSTNLAALRKQLLGEECIHFEVSKECTSKRGENFVYQCCCVTHEDGTPLESEIISPTKNHLVVGNSGDSKYVDLPTAKGGAMFIAKAGYCYINIFLAMLININEDEAKSFTKTVRDTLVPKLGTWPSMMDLATACHFLAVLYPETRNAELPRILVDHEAKIFHVVDSFGSLSTGMHVLKANTINQLISFASDTLDSNMKTYLVGGLEVDKCDEFKNVKLLIRSIYKPQIMEQVLKEEPYLLLMSVLSPGVLMALFNSGSLEKATQYWITRSHSLAAITSMLSALAAKVSLASTLNAQMSVIDEHAAVLYDSVFVGTQPYASYMMAVKTLERMKARTESDHTLNDLGFSVLRQATPHLVEKKLSPGIGASLERVKLVGKILCNLGIAAMAKTYTKTFHPKRRRRFRRQVRHLRSVITWQPVQTPERRSPMEKRRCGLLYIPVDGEAILQSHRNLTKFSS</sequence>
<dbReference type="EC" id="3.4.21.-"/>
<dbReference type="EC" id="3.4.22.45"/>
<dbReference type="EMBL" id="D13751">
    <property type="status" value="NOT_ANNOTATED_CDS"/>
    <property type="molecule type" value="Genomic_RNA"/>
</dbReference>
<dbReference type="SMR" id="P0CK02"/>
<dbReference type="Proteomes" id="UP000006685">
    <property type="component" value="Segment"/>
</dbReference>
<dbReference type="GO" id="GO:0044219">
    <property type="term" value="C:host cell plasmodesma"/>
    <property type="evidence" value="ECO:0007669"/>
    <property type="project" value="UniProtKB-SubCell"/>
</dbReference>
<dbReference type="GO" id="GO:0004197">
    <property type="term" value="F:cysteine-type endopeptidase activity"/>
    <property type="evidence" value="ECO:0007669"/>
    <property type="project" value="InterPro"/>
</dbReference>
<dbReference type="GO" id="GO:0008236">
    <property type="term" value="F:serine-type peptidase activity"/>
    <property type="evidence" value="ECO:0007669"/>
    <property type="project" value="UniProtKB-KW"/>
</dbReference>
<dbReference type="GO" id="GO:0006508">
    <property type="term" value="P:proteolysis"/>
    <property type="evidence" value="ECO:0007669"/>
    <property type="project" value="UniProtKB-KW"/>
</dbReference>
<dbReference type="GO" id="GO:0052170">
    <property type="term" value="P:symbiont-mediated suppression of host innate immune response"/>
    <property type="evidence" value="ECO:0007669"/>
    <property type="project" value="UniProtKB-KW"/>
</dbReference>
<dbReference type="GO" id="GO:0046740">
    <property type="term" value="P:transport of virus in host, cell to cell"/>
    <property type="evidence" value="ECO:0007669"/>
    <property type="project" value="UniProtKB-KW"/>
</dbReference>
<dbReference type="GO" id="GO:0075523">
    <property type="term" value="P:viral translational frameshifting"/>
    <property type="evidence" value="ECO:0007669"/>
    <property type="project" value="UniProtKB-KW"/>
</dbReference>
<dbReference type="Gene3D" id="3.90.70.150">
    <property type="entry name" value="Helper component proteinase"/>
    <property type="match status" value="1"/>
</dbReference>
<dbReference type="InterPro" id="IPR001456">
    <property type="entry name" value="HC-pro"/>
</dbReference>
<dbReference type="InterPro" id="IPR031159">
    <property type="entry name" value="HC_PRO_CPD_dom"/>
</dbReference>
<dbReference type="InterPro" id="IPR042308">
    <property type="entry name" value="HC_PRO_CPD_sf"/>
</dbReference>
<dbReference type="InterPro" id="IPR002540">
    <property type="entry name" value="Pept_S30_P1_potyvir"/>
</dbReference>
<dbReference type="InterPro" id="IPR039560">
    <property type="entry name" value="Potyvirid-P3"/>
</dbReference>
<dbReference type="Pfam" id="PF00851">
    <property type="entry name" value="Peptidase_C6"/>
    <property type="match status" value="1"/>
</dbReference>
<dbReference type="Pfam" id="PF01577">
    <property type="entry name" value="Peptidase_S30"/>
    <property type="match status" value="1"/>
</dbReference>
<dbReference type="Pfam" id="PF13608">
    <property type="entry name" value="Potyvirid-P3"/>
    <property type="match status" value="1"/>
</dbReference>
<dbReference type="PROSITE" id="PS51744">
    <property type="entry name" value="HC_PRO_CPD"/>
    <property type="match status" value="1"/>
</dbReference>
<dbReference type="PROSITE" id="PS51871">
    <property type="entry name" value="PV_P1_PRO"/>
    <property type="match status" value="1"/>
</dbReference>